<dbReference type="EMBL" id="AAFI02000057">
    <property type="protein sequence ID" value="EAL65504.1"/>
    <property type="molecule type" value="Genomic_DNA"/>
</dbReference>
<dbReference type="RefSeq" id="XP_638856.1">
    <property type="nucleotide sequence ID" value="XM_633764.1"/>
</dbReference>
<dbReference type="EnsemblProtists" id="EAL65504">
    <property type="protein sequence ID" value="EAL65504"/>
    <property type="gene ID" value="DDB_G0283779"/>
</dbReference>
<dbReference type="GeneID" id="8624254"/>
<dbReference type="KEGG" id="ddi:DDB_G0283779"/>
<dbReference type="HOGENOM" id="CLU_205532_0_0_1"/>
<dbReference type="InParanoid" id="Q54QL5"/>
<dbReference type="PRO" id="PR:Q54QL5"/>
<dbReference type="Proteomes" id="UP000002195">
    <property type="component" value="Chromosome 4"/>
</dbReference>
<protein>
    <recommendedName>
        <fullName>Putative uncharacterized protein DDB_G0283779</fullName>
    </recommendedName>
</protein>
<reference key="1">
    <citation type="journal article" date="2005" name="Nature">
        <title>The genome of the social amoeba Dictyostelium discoideum.</title>
        <authorList>
            <person name="Eichinger L."/>
            <person name="Pachebat J.A."/>
            <person name="Gloeckner G."/>
            <person name="Rajandream M.A."/>
            <person name="Sucgang R."/>
            <person name="Berriman M."/>
            <person name="Song J."/>
            <person name="Olsen R."/>
            <person name="Szafranski K."/>
            <person name="Xu Q."/>
            <person name="Tunggal B."/>
            <person name="Kummerfeld S."/>
            <person name="Madera M."/>
            <person name="Konfortov B.A."/>
            <person name="Rivero F."/>
            <person name="Bankier A.T."/>
            <person name="Lehmann R."/>
            <person name="Hamlin N."/>
            <person name="Davies R."/>
            <person name="Gaudet P."/>
            <person name="Fey P."/>
            <person name="Pilcher K."/>
            <person name="Chen G."/>
            <person name="Saunders D."/>
            <person name="Sodergren E.J."/>
            <person name="Davis P."/>
            <person name="Kerhornou A."/>
            <person name="Nie X."/>
            <person name="Hall N."/>
            <person name="Anjard C."/>
            <person name="Hemphill L."/>
            <person name="Bason N."/>
            <person name="Farbrother P."/>
            <person name="Desany B."/>
            <person name="Just E."/>
            <person name="Morio T."/>
            <person name="Rost R."/>
            <person name="Churcher C.M."/>
            <person name="Cooper J."/>
            <person name="Haydock S."/>
            <person name="van Driessche N."/>
            <person name="Cronin A."/>
            <person name="Goodhead I."/>
            <person name="Muzny D.M."/>
            <person name="Mourier T."/>
            <person name="Pain A."/>
            <person name="Lu M."/>
            <person name="Harper D."/>
            <person name="Lindsay R."/>
            <person name="Hauser H."/>
            <person name="James K.D."/>
            <person name="Quiles M."/>
            <person name="Madan Babu M."/>
            <person name="Saito T."/>
            <person name="Buchrieser C."/>
            <person name="Wardroper A."/>
            <person name="Felder M."/>
            <person name="Thangavelu M."/>
            <person name="Johnson D."/>
            <person name="Knights A."/>
            <person name="Loulseged H."/>
            <person name="Mungall K.L."/>
            <person name="Oliver K."/>
            <person name="Price C."/>
            <person name="Quail M.A."/>
            <person name="Urushihara H."/>
            <person name="Hernandez J."/>
            <person name="Rabbinowitsch E."/>
            <person name="Steffen D."/>
            <person name="Sanders M."/>
            <person name="Ma J."/>
            <person name="Kohara Y."/>
            <person name="Sharp S."/>
            <person name="Simmonds M.N."/>
            <person name="Spiegler S."/>
            <person name="Tivey A."/>
            <person name="Sugano S."/>
            <person name="White B."/>
            <person name="Walker D."/>
            <person name="Woodward J.R."/>
            <person name="Winckler T."/>
            <person name="Tanaka Y."/>
            <person name="Shaulsky G."/>
            <person name="Schleicher M."/>
            <person name="Weinstock G.M."/>
            <person name="Rosenthal A."/>
            <person name="Cox E.C."/>
            <person name="Chisholm R.L."/>
            <person name="Gibbs R.A."/>
            <person name="Loomis W.F."/>
            <person name="Platzer M."/>
            <person name="Kay R.R."/>
            <person name="Williams J.G."/>
            <person name="Dear P.H."/>
            <person name="Noegel A.A."/>
            <person name="Barrell B.G."/>
            <person name="Kuspa A."/>
        </authorList>
    </citation>
    <scope>NUCLEOTIDE SEQUENCE [LARGE SCALE GENOMIC DNA]</scope>
    <source>
        <strain>AX4</strain>
    </source>
</reference>
<name>Y5670_DICDI</name>
<gene>
    <name type="ORF">DDB_G0283779</name>
</gene>
<proteinExistence type="predicted"/>
<keyword id="KW-1185">Reference proteome</keyword>
<organism>
    <name type="scientific">Dictyostelium discoideum</name>
    <name type="common">Social amoeba</name>
    <dbReference type="NCBI Taxonomy" id="44689"/>
    <lineage>
        <taxon>Eukaryota</taxon>
        <taxon>Amoebozoa</taxon>
        <taxon>Evosea</taxon>
        <taxon>Eumycetozoa</taxon>
        <taxon>Dictyostelia</taxon>
        <taxon>Dictyosteliales</taxon>
        <taxon>Dictyosteliaceae</taxon>
        <taxon>Dictyostelium</taxon>
    </lineage>
</organism>
<sequence length="62" mass="7417">MIIDIEIWIQLFFFNNYNNYNNNNNNNNNNNNNNNNNNNNNNNNNNNNNNNNNNNNNNKNNN</sequence>
<accession>Q54QL5</accession>
<evidence type="ECO:0000256" key="1">
    <source>
        <dbReference type="SAM" id="MobiDB-lite"/>
    </source>
</evidence>
<feature type="chain" id="PRO_0000350891" description="Putative uncharacterized protein DDB_G0283779">
    <location>
        <begin position="1"/>
        <end position="62"/>
    </location>
</feature>
<feature type="region of interest" description="Disordered" evidence="1">
    <location>
        <begin position="17"/>
        <end position="62"/>
    </location>
</feature>